<accession>P33095</accession>
<gene>
    <name type="primary">RPS15A</name>
</gene>
<protein>
    <recommendedName>
        <fullName evidence="2">Small ribosomal subunit protein uS8</fullName>
    </recommendedName>
    <alternativeName>
        <fullName>40S ribosomal protein S15a</fullName>
    </alternativeName>
    <alternativeName>
        <fullName>Ribosomal protein S24</fullName>
    </alternativeName>
</protein>
<sequence>MVRMNVLADALRSICNAEKRCKRQVLIRPCSKVTVKFLMVMMKHGYIGEFEIVDDHRGGKIIVNLNGRLNKCGVISPRFDVPINEMEKWTSNLLPSRQFGYVVLTTSGGIMDHEEARRKHVGGKILGFFF</sequence>
<proteinExistence type="evidence at transcript level"/>
<organism>
    <name type="scientific">Strongylocentrotus purpuratus</name>
    <name type="common">Purple sea urchin</name>
    <dbReference type="NCBI Taxonomy" id="7668"/>
    <lineage>
        <taxon>Eukaryota</taxon>
        <taxon>Metazoa</taxon>
        <taxon>Echinodermata</taxon>
        <taxon>Eleutherozoa</taxon>
        <taxon>Echinozoa</taxon>
        <taxon>Echinoidea</taxon>
        <taxon>Euechinoidea</taxon>
        <taxon>Echinacea</taxon>
        <taxon>Camarodonta</taxon>
        <taxon>Echinidea</taxon>
        <taxon>Strongylocentrotidae</taxon>
        <taxon>Strongylocentrotus</taxon>
    </lineage>
</organism>
<comment type="similarity">
    <text evidence="2">Belongs to the universal ribosomal protein uS8 family.</text>
</comment>
<evidence type="ECO:0000250" key="1"/>
<evidence type="ECO:0000305" key="2"/>
<name>RS15A_STRPU</name>
<feature type="initiator methionine" description="Removed" evidence="1">
    <location>
        <position position="1"/>
    </location>
</feature>
<feature type="chain" id="PRO_0000126607" description="Small ribosomal subunit protein uS8">
    <location>
        <begin position="2"/>
        <end position="130"/>
    </location>
</feature>
<keyword id="KW-1185">Reference proteome</keyword>
<keyword id="KW-0687">Ribonucleoprotein</keyword>
<keyword id="KW-0689">Ribosomal protein</keyword>
<reference key="1">
    <citation type="journal article" date="1992" name="Dev. Biol.">
        <title>Tissue-restricted accumulation of a ribosomal protein mRNA is not coordinated with rRNA transcription and precedes growth of the sea urchin pluteus larva.</title>
        <authorList>
            <person name="Angerer L.M."/>
            <person name="Yang Q."/>
            <person name="Liesveld J."/>
            <person name="Kingsley P.D."/>
            <person name="Angerer R.C."/>
        </authorList>
    </citation>
    <scope>NUCLEOTIDE SEQUENCE [MRNA]</scope>
</reference>
<dbReference type="EMBL" id="S72597">
    <property type="protein sequence ID" value="AAB20674.1"/>
    <property type="molecule type" value="mRNA"/>
</dbReference>
<dbReference type="PIR" id="A43907">
    <property type="entry name" value="A43907"/>
</dbReference>
<dbReference type="RefSeq" id="NP_999780.1">
    <property type="nucleotide sequence ID" value="NM_214615.2"/>
</dbReference>
<dbReference type="SMR" id="P33095"/>
<dbReference type="FunCoup" id="P33095">
    <property type="interactions" value="1535"/>
</dbReference>
<dbReference type="STRING" id="7668.P33095"/>
<dbReference type="EnsemblMetazoa" id="NM_214615">
    <property type="protein sequence ID" value="NP_999780"/>
    <property type="gene ID" value="GeneID_373469"/>
</dbReference>
<dbReference type="GeneID" id="373469"/>
<dbReference type="KEGG" id="spu:373469"/>
<dbReference type="CTD" id="6210"/>
<dbReference type="eggNOG" id="KOG1754">
    <property type="taxonomic scope" value="Eukaryota"/>
</dbReference>
<dbReference type="HOGENOM" id="CLU_098428_1_1_1"/>
<dbReference type="InParanoid" id="P33095"/>
<dbReference type="OrthoDB" id="10250260at2759"/>
<dbReference type="PhylomeDB" id="P33095"/>
<dbReference type="Proteomes" id="UP000007110">
    <property type="component" value="Unassembled WGS sequence"/>
</dbReference>
<dbReference type="GO" id="GO:0022627">
    <property type="term" value="C:cytosolic small ribosomal subunit"/>
    <property type="evidence" value="ECO:0000318"/>
    <property type="project" value="GO_Central"/>
</dbReference>
<dbReference type="GO" id="GO:0003735">
    <property type="term" value="F:structural constituent of ribosome"/>
    <property type="evidence" value="ECO:0000318"/>
    <property type="project" value="GO_Central"/>
</dbReference>
<dbReference type="GO" id="GO:0006412">
    <property type="term" value="P:translation"/>
    <property type="evidence" value="ECO:0007669"/>
    <property type="project" value="InterPro"/>
</dbReference>
<dbReference type="FunFam" id="3.30.1370.30:FF:000001">
    <property type="entry name" value="40S ribosomal protein S15a"/>
    <property type="match status" value="1"/>
</dbReference>
<dbReference type="FunFam" id="3.30.1490.10:FF:000002">
    <property type="entry name" value="40S ribosomal protein S15a"/>
    <property type="match status" value="1"/>
</dbReference>
<dbReference type="Gene3D" id="3.30.1370.30">
    <property type="match status" value="1"/>
</dbReference>
<dbReference type="Gene3D" id="3.30.1490.10">
    <property type="match status" value="1"/>
</dbReference>
<dbReference type="InterPro" id="IPR000630">
    <property type="entry name" value="Ribosomal_uS8"/>
</dbReference>
<dbReference type="InterPro" id="IPR047863">
    <property type="entry name" value="Ribosomal_uS8_CS"/>
</dbReference>
<dbReference type="InterPro" id="IPR035987">
    <property type="entry name" value="Ribosomal_uS8_sf"/>
</dbReference>
<dbReference type="NCBIfam" id="NF003115">
    <property type="entry name" value="PRK04034.1"/>
    <property type="match status" value="1"/>
</dbReference>
<dbReference type="PANTHER" id="PTHR11758">
    <property type="entry name" value="40S RIBOSOMAL PROTEIN S15A"/>
    <property type="match status" value="1"/>
</dbReference>
<dbReference type="Pfam" id="PF00410">
    <property type="entry name" value="Ribosomal_S8"/>
    <property type="match status" value="1"/>
</dbReference>
<dbReference type="SUPFAM" id="SSF56047">
    <property type="entry name" value="Ribosomal protein S8"/>
    <property type="match status" value="1"/>
</dbReference>
<dbReference type="PROSITE" id="PS00053">
    <property type="entry name" value="RIBOSOMAL_S8"/>
    <property type="match status" value="1"/>
</dbReference>